<comment type="function">
    <text evidence="1">Binds directly to 23S rRNA. The L1 stalk is quite mobile in the ribosome, and is involved in E site tRNA release.</text>
</comment>
<comment type="function">
    <text evidence="1">Protein L1 is also a translational repressor protein, it controls the translation of the L11 operon by binding to its mRNA.</text>
</comment>
<comment type="subunit">
    <text evidence="1">Part of the 50S ribosomal subunit.</text>
</comment>
<comment type="similarity">
    <text evidence="1">Belongs to the universal ribosomal protein uL1 family.</text>
</comment>
<reference key="1">
    <citation type="journal article" date="2005" name="Nucleic Acids Res.">
        <title>The genome sequence of Xanthomonas oryzae pathovar oryzae KACC10331, the bacterial blight pathogen of rice.</title>
        <authorList>
            <person name="Lee B.-M."/>
            <person name="Park Y.-J."/>
            <person name="Park D.-S."/>
            <person name="Kang H.-W."/>
            <person name="Kim J.-G."/>
            <person name="Song E.-S."/>
            <person name="Park I.-C."/>
            <person name="Yoon U.-H."/>
            <person name="Hahn J.-H."/>
            <person name="Koo B.-S."/>
            <person name="Lee G.-B."/>
            <person name="Kim H."/>
            <person name="Park H.-S."/>
            <person name="Yoon K.-O."/>
            <person name="Kim J.-H."/>
            <person name="Jung C.-H."/>
            <person name="Koh N.-H."/>
            <person name="Seo J.-S."/>
            <person name="Go S.-J."/>
        </authorList>
    </citation>
    <scope>NUCLEOTIDE SEQUENCE [LARGE SCALE GENOMIC DNA]</scope>
    <source>
        <strain>KACC10331 / KXO85</strain>
    </source>
</reference>
<proteinExistence type="inferred from homology"/>
<keyword id="KW-1185">Reference proteome</keyword>
<keyword id="KW-0678">Repressor</keyword>
<keyword id="KW-0687">Ribonucleoprotein</keyword>
<keyword id="KW-0689">Ribosomal protein</keyword>
<keyword id="KW-0694">RNA-binding</keyword>
<keyword id="KW-0699">rRNA-binding</keyword>
<keyword id="KW-0810">Translation regulation</keyword>
<keyword id="KW-0820">tRNA-binding</keyword>
<name>RL1_XANOR</name>
<accession>Q5GWS3</accession>
<dbReference type="EMBL" id="AE013598">
    <property type="protein sequence ID" value="AAW76848.1"/>
    <property type="molecule type" value="Genomic_DNA"/>
</dbReference>
<dbReference type="SMR" id="Q5GWS3"/>
<dbReference type="STRING" id="291331.XOO3594"/>
<dbReference type="KEGG" id="xoo:XOO3594"/>
<dbReference type="PATRIC" id="fig|291331.8.peg.3983"/>
<dbReference type="HOGENOM" id="CLU_062853_0_0_6"/>
<dbReference type="Proteomes" id="UP000006735">
    <property type="component" value="Chromosome"/>
</dbReference>
<dbReference type="GO" id="GO:0022625">
    <property type="term" value="C:cytosolic large ribosomal subunit"/>
    <property type="evidence" value="ECO:0007669"/>
    <property type="project" value="TreeGrafter"/>
</dbReference>
<dbReference type="GO" id="GO:0019843">
    <property type="term" value="F:rRNA binding"/>
    <property type="evidence" value="ECO:0007669"/>
    <property type="project" value="UniProtKB-UniRule"/>
</dbReference>
<dbReference type="GO" id="GO:0003735">
    <property type="term" value="F:structural constituent of ribosome"/>
    <property type="evidence" value="ECO:0007669"/>
    <property type="project" value="InterPro"/>
</dbReference>
<dbReference type="GO" id="GO:0000049">
    <property type="term" value="F:tRNA binding"/>
    <property type="evidence" value="ECO:0007669"/>
    <property type="project" value="UniProtKB-KW"/>
</dbReference>
<dbReference type="GO" id="GO:0006417">
    <property type="term" value="P:regulation of translation"/>
    <property type="evidence" value="ECO:0007669"/>
    <property type="project" value="UniProtKB-KW"/>
</dbReference>
<dbReference type="GO" id="GO:0006412">
    <property type="term" value="P:translation"/>
    <property type="evidence" value="ECO:0007669"/>
    <property type="project" value="UniProtKB-UniRule"/>
</dbReference>
<dbReference type="CDD" id="cd00403">
    <property type="entry name" value="Ribosomal_L1"/>
    <property type="match status" value="1"/>
</dbReference>
<dbReference type="FunFam" id="3.40.50.790:FF:000001">
    <property type="entry name" value="50S ribosomal protein L1"/>
    <property type="match status" value="1"/>
</dbReference>
<dbReference type="Gene3D" id="3.30.190.20">
    <property type="match status" value="1"/>
</dbReference>
<dbReference type="Gene3D" id="3.40.50.790">
    <property type="match status" value="1"/>
</dbReference>
<dbReference type="HAMAP" id="MF_01318_B">
    <property type="entry name" value="Ribosomal_uL1_B"/>
    <property type="match status" value="1"/>
</dbReference>
<dbReference type="InterPro" id="IPR005878">
    <property type="entry name" value="Ribosom_uL1_bac-type"/>
</dbReference>
<dbReference type="InterPro" id="IPR002143">
    <property type="entry name" value="Ribosomal_uL1"/>
</dbReference>
<dbReference type="InterPro" id="IPR023674">
    <property type="entry name" value="Ribosomal_uL1-like"/>
</dbReference>
<dbReference type="InterPro" id="IPR028364">
    <property type="entry name" value="Ribosomal_uL1/biogenesis"/>
</dbReference>
<dbReference type="InterPro" id="IPR016095">
    <property type="entry name" value="Ribosomal_uL1_3-a/b-sand"/>
</dbReference>
<dbReference type="InterPro" id="IPR023673">
    <property type="entry name" value="Ribosomal_uL1_CS"/>
</dbReference>
<dbReference type="NCBIfam" id="TIGR01169">
    <property type="entry name" value="rplA_bact"/>
    <property type="match status" value="1"/>
</dbReference>
<dbReference type="PANTHER" id="PTHR36427">
    <property type="entry name" value="54S RIBOSOMAL PROTEIN L1, MITOCHONDRIAL"/>
    <property type="match status" value="1"/>
</dbReference>
<dbReference type="PANTHER" id="PTHR36427:SF3">
    <property type="entry name" value="LARGE RIBOSOMAL SUBUNIT PROTEIN UL1M"/>
    <property type="match status" value="1"/>
</dbReference>
<dbReference type="Pfam" id="PF00687">
    <property type="entry name" value="Ribosomal_L1"/>
    <property type="match status" value="1"/>
</dbReference>
<dbReference type="PIRSF" id="PIRSF002155">
    <property type="entry name" value="Ribosomal_L1"/>
    <property type="match status" value="1"/>
</dbReference>
<dbReference type="SUPFAM" id="SSF56808">
    <property type="entry name" value="Ribosomal protein L1"/>
    <property type="match status" value="1"/>
</dbReference>
<dbReference type="PROSITE" id="PS01199">
    <property type="entry name" value="RIBOSOMAL_L1"/>
    <property type="match status" value="1"/>
</dbReference>
<evidence type="ECO:0000255" key="1">
    <source>
        <dbReference type="HAMAP-Rule" id="MF_01318"/>
    </source>
</evidence>
<evidence type="ECO:0000305" key="2"/>
<sequence>MAQSKRVKAIAAAVAPGKAYAFEDAIKILKTATKAKFVESIDVAVRLGVDAKKSDQQVRGSTVLPAGTGKSVRVAVFAPAGAKADEALAAGAEAVGMDDLAEKMQAGDLSYDVVIATPDAMRVVGKLGTLLGPRGLMPNPKVGTVSANPGEAVKNAKSGQVRYRTDKASIIHCTIGKASFDDEALKSNLQALLLDLVKAKPATSKGTYLQKVSVSSTMGPGVTVDQSSLSLK</sequence>
<protein>
    <recommendedName>
        <fullName evidence="1">Large ribosomal subunit protein uL1</fullName>
    </recommendedName>
    <alternativeName>
        <fullName evidence="2">50S ribosomal protein L1</fullName>
    </alternativeName>
</protein>
<organism>
    <name type="scientific">Xanthomonas oryzae pv. oryzae (strain KACC10331 / KXO85)</name>
    <dbReference type="NCBI Taxonomy" id="291331"/>
    <lineage>
        <taxon>Bacteria</taxon>
        <taxon>Pseudomonadati</taxon>
        <taxon>Pseudomonadota</taxon>
        <taxon>Gammaproteobacteria</taxon>
        <taxon>Lysobacterales</taxon>
        <taxon>Lysobacteraceae</taxon>
        <taxon>Xanthomonas</taxon>
    </lineage>
</organism>
<gene>
    <name evidence="1" type="primary">rplA</name>
    <name type="ordered locus">XOO3594</name>
</gene>
<feature type="chain" id="PRO_0000230652" description="Large ribosomal subunit protein uL1">
    <location>
        <begin position="1"/>
        <end position="232"/>
    </location>
</feature>